<proteinExistence type="inferred from homology"/>
<organism>
    <name type="scientific">Rhizobium meliloti (strain 1021)</name>
    <name type="common">Ensifer meliloti</name>
    <name type="synonym">Sinorhizobium meliloti</name>
    <dbReference type="NCBI Taxonomy" id="266834"/>
    <lineage>
        <taxon>Bacteria</taxon>
        <taxon>Pseudomonadati</taxon>
        <taxon>Pseudomonadota</taxon>
        <taxon>Alphaproteobacteria</taxon>
        <taxon>Hyphomicrobiales</taxon>
        <taxon>Rhizobiaceae</taxon>
        <taxon>Sinorhizobium/Ensifer group</taxon>
        <taxon>Sinorhizobium</taxon>
    </lineage>
</organism>
<accession>Q05577</accession>
<feature type="chain" id="PRO_0000412300" description="Cbb3-type cytochrome c oxidase subunit FixP">
    <location>
        <begin position="1"/>
        <end position="289"/>
    </location>
</feature>
<feature type="topological domain" description="Cytoplasmic" evidence="4 8">
    <location>
        <begin position="1"/>
        <end position="33"/>
    </location>
</feature>
<feature type="transmembrane region" description="Helical" evidence="8">
    <location>
        <begin position="34"/>
        <end position="56"/>
    </location>
</feature>
<feature type="topological domain" description="Periplasmic" evidence="4 8">
    <location>
        <begin position="57"/>
        <end position="289"/>
    </location>
</feature>
<feature type="domain" description="Cytochrome c 1" evidence="9">
    <location>
        <begin position="110"/>
        <end position="198"/>
    </location>
</feature>
<feature type="domain" description="Cytochrome c 2" evidence="9">
    <location>
        <begin position="205"/>
        <end position="286"/>
    </location>
</feature>
<feature type="binding site" description="covalent" evidence="2">
    <location>
        <position position="123"/>
    </location>
    <ligand>
        <name>heme c</name>
        <dbReference type="ChEBI" id="CHEBI:61717"/>
        <label>1</label>
    </ligand>
</feature>
<feature type="binding site" description="covalent" evidence="2">
    <location>
        <position position="126"/>
    </location>
    <ligand>
        <name>heme c</name>
        <dbReference type="ChEBI" id="CHEBI:61717"/>
        <label>1</label>
    </ligand>
</feature>
<feature type="binding site" description="axial binding residue" evidence="2">
    <location>
        <position position="127"/>
    </location>
    <ligand>
        <name>heme c</name>
        <dbReference type="ChEBI" id="CHEBI:61717"/>
        <label>1</label>
    </ligand>
    <ligandPart>
        <name>Fe</name>
        <dbReference type="ChEBI" id="CHEBI:18248"/>
    </ligandPart>
</feature>
<feature type="binding site" description="axial binding residue" evidence="2">
    <location>
        <position position="175"/>
    </location>
    <ligand>
        <name>heme c</name>
        <dbReference type="ChEBI" id="CHEBI:61717"/>
        <label>2</label>
    </ligand>
    <ligandPart>
        <name>Fe</name>
        <dbReference type="ChEBI" id="CHEBI:18248"/>
    </ligandPart>
</feature>
<feature type="binding site" description="covalent" evidence="2">
    <location>
        <position position="218"/>
    </location>
    <ligand>
        <name>heme c</name>
        <dbReference type="ChEBI" id="CHEBI:61717"/>
        <label>2</label>
    </ligand>
</feature>
<feature type="binding site" description="covalent" evidence="2">
    <location>
        <position position="221"/>
    </location>
    <ligand>
        <name>heme c</name>
        <dbReference type="ChEBI" id="CHEBI:61717"/>
        <label>2</label>
    </ligand>
</feature>
<feature type="binding site" description="axial binding residue" evidence="2">
    <location>
        <position position="222"/>
    </location>
    <ligand>
        <name>heme c</name>
        <dbReference type="ChEBI" id="CHEBI:61717"/>
        <label>2</label>
    </ligand>
    <ligandPart>
        <name>Fe</name>
        <dbReference type="ChEBI" id="CHEBI:18248"/>
    </ligandPart>
</feature>
<feature type="binding site" description="axial binding residue" evidence="2">
    <location>
        <position position="263"/>
    </location>
    <ligand>
        <name>heme c</name>
        <dbReference type="ChEBI" id="CHEBI:61717"/>
        <label>1</label>
    </ligand>
    <ligandPart>
        <name>Fe</name>
        <dbReference type="ChEBI" id="CHEBI:18248"/>
    </ligandPart>
</feature>
<geneLocation type="plasmid" evidence="11">
    <name>pSymA</name>
    <name>megaplasmid 1</name>
</geneLocation>
<gene>
    <name evidence="12" type="primary">fixP</name>
    <name evidence="11" type="synonym">fixP1</name>
    <name type="ordered locus">RA0662</name>
    <name type="ORF">SMa1213</name>
</gene>
<reference evidence="12" key="1">
    <citation type="journal article" date="1997" name="Mol. Microbiol.">
        <title>Negative autoregulation of the Rhizobium meliloti fixK gene is indirect and requires a newly identified regulator, FixT.</title>
        <authorList>
            <person name="Foussard M."/>
            <person name="Garnerone A.-M."/>
            <person name="Ni F."/>
            <person name="Soupene E."/>
            <person name="Boistard P."/>
            <person name="Batut J."/>
        </authorList>
    </citation>
    <scope>NUCLEOTIDE SEQUENCE [GENOMIC DNA]</scope>
    <source>
        <strain evidence="12">RCR2011 / SU47</strain>
    </source>
</reference>
<reference evidence="11" key="2">
    <citation type="journal article" date="2001" name="Proc. Natl. Acad. Sci. U.S.A.">
        <title>Nucleotide sequence and predicted functions of the entire Sinorhizobium meliloti pSymA megaplasmid.</title>
        <authorList>
            <person name="Barnett M.J."/>
            <person name="Fisher R.F."/>
            <person name="Jones T."/>
            <person name="Komp C."/>
            <person name="Abola A.P."/>
            <person name="Barloy-Hubler F."/>
            <person name="Bowser L."/>
            <person name="Capela D."/>
            <person name="Galibert F."/>
            <person name="Gouzy J."/>
            <person name="Gurjal M."/>
            <person name="Hong A."/>
            <person name="Huizar L."/>
            <person name="Hyman R.W."/>
            <person name="Kahn D."/>
            <person name="Kahn M.L."/>
            <person name="Kalman S."/>
            <person name="Keating D.H."/>
            <person name="Palm C."/>
            <person name="Peck M.C."/>
            <person name="Surzycki R."/>
            <person name="Wells D.H."/>
            <person name="Yeh K.-C."/>
            <person name="Davis R.W."/>
            <person name="Federspiel N.A."/>
            <person name="Long S.R."/>
        </authorList>
    </citation>
    <scope>NUCLEOTIDE SEQUENCE [LARGE SCALE GENOMIC DNA]</scope>
    <source>
        <strain evidence="11">1021</strain>
        <plasmid>pSymA (megaplasmid 1)</plasmid>
    </source>
</reference>
<reference key="3">
    <citation type="journal article" date="2001" name="Science">
        <title>The composite genome of the legume symbiont Sinorhizobium meliloti.</title>
        <authorList>
            <person name="Galibert F."/>
            <person name="Finan T.M."/>
            <person name="Long S.R."/>
            <person name="Puehler A."/>
            <person name="Abola P."/>
            <person name="Ampe F."/>
            <person name="Barloy-Hubler F."/>
            <person name="Barnett M.J."/>
            <person name="Becker A."/>
            <person name="Boistard P."/>
            <person name="Bothe G."/>
            <person name="Boutry M."/>
            <person name="Bowser L."/>
            <person name="Buhrmester J."/>
            <person name="Cadieu E."/>
            <person name="Capela D."/>
            <person name="Chain P."/>
            <person name="Cowie A."/>
            <person name="Davis R.W."/>
            <person name="Dreano S."/>
            <person name="Federspiel N.A."/>
            <person name="Fisher R.F."/>
            <person name="Gloux S."/>
            <person name="Godrie T."/>
            <person name="Goffeau A."/>
            <person name="Golding B."/>
            <person name="Gouzy J."/>
            <person name="Gurjal M."/>
            <person name="Hernandez-Lucas I."/>
            <person name="Hong A."/>
            <person name="Huizar L."/>
            <person name="Hyman R.W."/>
            <person name="Jones T."/>
            <person name="Kahn D."/>
            <person name="Kahn M.L."/>
            <person name="Kalman S."/>
            <person name="Keating D.H."/>
            <person name="Kiss E."/>
            <person name="Komp C."/>
            <person name="Lelaure V."/>
            <person name="Masuy D."/>
            <person name="Palm C."/>
            <person name="Peck M.C."/>
            <person name="Pohl T.M."/>
            <person name="Portetelle D."/>
            <person name="Purnelle B."/>
            <person name="Ramsperger U."/>
            <person name="Surzycki R."/>
            <person name="Thebault P."/>
            <person name="Vandenbol M."/>
            <person name="Vorhoelter F.J."/>
            <person name="Weidner S."/>
            <person name="Wells D.H."/>
            <person name="Wong K."/>
            <person name="Yeh K.-C."/>
            <person name="Batut J."/>
        </authorList>
    </citation>
    <scope>NUCLEOTIDE SEQUENCE [LARGE SCALE GENOMIC DNA]</scope>
    <source>
        <strain>1021</strain>
    </source>
</reference>
<sequence>MADKHKHVDEVSGVETTGHEWDGIRELNNPMPRWWVYSFYATIIWAIGYAIAYPSWPMLTEATKGMLGYSSRAEVSVELAAAKAAQAGNLEQIASSSVEEIIANPQLQQFAVSAGASAFKVNCAQCHGSGAAGGQGFPNLNDDDWLWGGKPQEIYQTIAHGVRHAPDGETRVSEMPPFGDMLTPELMQQTAAYVVSLTQAPSQPHLVQQGKQVFADNCASCHGADAKGNREMGAPNLADAIWLKGEGEQAVITQMKTPKHGVMPAWLPRLGDDTVKQLAVFVHSLGGGE</sequence>
<dbReference type="EMBL" id="Z21854">
    <property type="protein sequence ID" value="CAA79904.1"/>
    <property type="molecule type" value="Genomic_DNA"/>
</dbReference>
<dbReference type="EMBL" id="AE006469">
    <property type="protein sequence ID" value="AAK65320.1"/>
    <property type="molecule type" value="Genomic_DNA"/>
</dbReference>
<dbReference type="PIR" id="F95344">
    <property type="entry name" value="F95344"/>
</dbReference>
<dbReference type="PIR" id="S39991">
    <property type="entry name" value="S39991"/>
</dbReference>
<dbReference type="RefSeq" id="NP_435908.1">
    <property type="nucleotide sequence ID" value="NC_003037.1"/>
</dbReference>
<dbReference type="SMR" id="Q05577"/>
<dbReference type="EnsemblBacteria" id="AAK65320">
    <property type="protein sequence ID" value="AAK65320"/>
    <property type="gene ID" value="SMa1213"/>
</dbReference>
<dbReference type="KEGG" id="sme:SMa1213"/>
<dbReference type="PATRIC" id="fig|266834.11.peg.682"/>
<dbReference type="HOGENOM" id="CLU_047545_2_0_5"/>
<dbReference type="OrthoDB" id="9811281at2"/>
<dbReference type="UniPathway" id="UPA00705"/>
<dbReference type="Proteomes" id="UP000001976">
    <property type="component" value="Plasmid pSymA"/>
</dbReference>
<dbReference type="GO" id="GO:0005886">
    <property type="term" value="C:plasma membrane"/>
    <property type="evidence" value="ECO:0007669"/>
    <property type="project" value="UniProtKB-SubCell"/>
</dbReference>
<dbReference type="GO" id="GO:0009055">
    <property type="term" value="F:electron transfer activity"/>
    <property type="evidence" value="ECO:0007669"/>
    <property type="project" value="InterPro"/>
</dbReference>
<dbReference type="GO" id="GO:0020037">
    <property type="term" value="F:heme binding"/>
    <property type="evidence" value="ECO:0007669"/>
    <property type="project" value="InterPro"/>
</dbReference>
<dbReference type="GO" id="GO:0005506">
    <property type="term" value="F:iron ion binding"/>
    <property type="evidence" value="ECO:0007669"/>
    <property type="project" value="InterPro"/>
</dbReference>
<dbReference type="GO" id="GO:0016491">
    <property type="term" value="F:oxidoreductase activity"/>
    <property type="evidence" value="ECO:0007669"/>
    <property type="project" value="UniProtKB-KW"/>
</dbReference>
<dbReference type="GO" id="GO:0006119">
    <property type="term" value="P:oxidative phosphorylation"/>
    <property type="evidence" value="ECO:0007669"/>
    <property type="project" value="UniProtKB-UniPathway"/>
</dbReference>
<dbReference type="GO" id="GO:1902600">
    <property type="term" value="P:proton transmembrane transport"/>
    <property type="evidence" value="ECO:0007669"/>
    <property type="project" value="UniProtKB-KW"/>
</dbReference>
<dbReference type="Gene3D" id="6.10.280.130">
    <property type="match status" value="1"/>
</dbReference>
<dbReference type="Gene3D" id="1.10.760.10">
    <property type="entry name" value="Cytochrome c-like domain"/>
    <property type="match status" value="2"/>
</dbReference>
<dbReference type="InterPro" id="IPR032858">
    <property type="entry name" value="CcoP_N"/>
</dbReference>
<dbReference type="InterPro" id="IPR038414">
    <property type="entry name" value="CcoP_N_sf"/>
</dbReference>
<dbReference type="InterPro" id="IPR009056">
    <property type="entry name" value="Cyt_c-like_dom"/>
</dbReference>
<dbReference type="InterPro" id="IPR036909">
    <property type="entry name" value="Cyt_c-like_dom_sf"/>
</dbReference>
<dbReference type="InterPro" id="IPR008168">
    <property type="entry name" value="Cyt_C_IC"/>
</dbReference>
<dbReference type="InterPro" id="IPR004678">
    <property type="entry name" value="Cyt_c_oxidase_cbb3_su3"/>
</dbReference>
<dbReference type="InterPro" id="IPR050597">
    <property type="entry name" value="Cytochrome_c_Oxidase_Subunit"/>
</dbReference>
<dbReference type="NCBIfam" id="TIGR00782">
    <property type="entry name" value="ccoP"/>
    <property type="match status" value="1"/>
</dbReference>
<dbReference type="PANTHER" id="PTHR33751">
    <property type="entry name" value="CBB3-TYPE CYTOCHROME C OXIDASE SUBUNIT FIXP"/>
    <property type="match status" value="1"/>
</dbReference>
<dbReference type="PANTHER" id="PTHR33751:SF1">
    <property type="entry name" value="CBB3-TYPE CYTOCHROME C OXIDASE SUBUNIT FIXP"/>
    <property type="match status" value="1"/>
</dbReference>
<dbReference type="Pfam" id="PF13442">
    <property type="entry name" value="Cytochrome_CBB3"/>
    <property type="match status" value="2"/>
</dbReference>
<dbReference type="Pfam" id="PF14715">
    <property type="entry name" value="FixP_N"/>
    <property type="match status" value="1"/>
</dbReference>
<dbReference type="PIRSF" id="PIRSF000006">
    <property type="entry name" value="Cbb3-Cox_fixP"/>
    <property type="match status" value="1"/>
</dbReference>
<dbReference type="PRINTS" id="PR00605">
    <property type="entry name" value="CYTCHROMECIC"/>
</dbReference>
<dbReference type="SUPFAM" id="SSF46626">
    <property type="entry name" value="Cytochrome c"/>
    <property type="match status" value="2"/>
</dbReference>
<dbReference type="PROSITE" id="PS51007">
    <property type="entry name" value="CYTC"/>
    <property type="match status" value="2"/>
</dbReference>
<comment type="function">
    <text evidence="2 3 6">C-type cytochrome. Part of the cbb3-type cytochrome c oxidase complex. FixP subunit is required for transferring electrons from donor cytochrome c via its heme groups to FixO subunit. From there, electrons are shuttled to the catalytic binuclear center of FixN subunit where oxygen reduction takes place. The complex also functions as a proton pump (By similarity).</text>
</comment>
<comment type="cofactor">
    <cofactor evidence="2">
        <name>heme c</name>
        <dbReference type="ChEBI" id="CHEBI:61717"/>
    </cofactor>
    <text evidence="2">Binds 2 heme C groups per subunit.</text>
</comment>
<comment type="pathway">
    <text evidence="1">Energy metabolism; oxidative phosphorylation.</text>
</comment>
<comment type="subunit">
    <text evidence="1">Component of the cbb3-type cytochrome c oxidase at least composed of FixN, FixO, FixQ and FixP.</text>
</comment>
<comment type="subcellular location">
    <subcellularLocation>
        <location evidence="7 8">Cell inner membrane</location>
        <topology evidence="7 8">Single-pass membrane protein</topology>
    </subcellularLocation>
</comment>
<comment type="similarity">
    <text evidence="10">Belongs to the CcoP / FixP family.</text>
</comment>
<evidence type="ECO:0000250" key="1">
    <source>
        <dbReference type="UniProtKB" id="D5ARP7"/>
    </source>
</evidence>
<evidence type="ECO:0000250" key="2">
    <source>
        <dbReference type="UniProtKB" id="D9IA45"/>
    </source>
</evidence>
<evidence type="ECO:0000250" key="3">
    <source>
        <dbReference type="UniProtKB" id="Q03075"/>
    </source>
</evidence>
<evidence type="ECO:0000250" key="4">
    <source>
        <dbReference type="UniProtKB" id="Q3J015"/>
    </source>
</evidence>
<evidence type="ECO:0000250" key="5">
    <source>
        <dbReference type="UniProtKB" id="Q52689"/>
    </source>
</evidence>
<evidence type="ECO:0000250" key="6">
    <source>
        <dbReference type="UniProtKB" id="Q8KLH5"/>
    </source>
</evidence>
<evidence type="ECO:0000250" key="7">
    <source>
        <dbReference type="UniProtKB" id="Q8KS19"/>
    </source>
</evidence>
<evidence type="ECO:0000255" key="8"/>
<evidence type="ECO:0000255" key="9">
    <source>
        <dbReference type="PROSITE-ProRule" id="PRU00433"/>
    </source>
</evidence>
<evidence type="ECO:0000305" key="10"/>
<evidence type="ECO:0000312" key="11">
    <source>
        <dbReference type="EMBL" id="AAK65320.1"/>
    </source>
</evidence>
<evidence type="ECO:0000312" key="12">
    <source>
        <dbReference type="EMBL" id="CAA79904.1"/>
    </source>
</evidence>
<keyword id="KW-0997">Cell inner membrane</keyword>
<keyword id="KW-1003">Cell membrane</keyword>
<keyword id="KW-0249">Electron transport</keyword>
<keyword id="KW-0349">Heme</keyword>
<keyword id="KW-0375">Hydrogen ion transport</keyword>
<keyword id="KW-0406">Ion transport</keyword>
<keyword id="KW-0408">Iron</keyword>
<keyword id="KW-0472">Membrane</keyword>
<keyword id="KW-0479">Metal-binding</keyword>
<keyword id="KW-0560">Oxidoreductase</keyword>
<keyword id="KW-0614">Plasmid</keyword>
<keyword id="KW-1185">Reference proteome</keyword>
<keyword id="KW-0677">Repeat</keyword>
<keyword id="KW-0679">Respiratory chain</keyword>
<keyword id="KW-0812">Transmembrane</keyword>
<keyword id="KW-1133">Transmembrane helix</keyword>
<keyword id="KW-0813">Transport</keyword>
<protein>
    <recommendedName>
        <fullName evidence="1 11">Cbb3-type cytochrome c oxidase subunit FixP</fullName>
        <shortName evidence="1">Cbb3-Cox subunit FixP</shortName>
    </recommendedName>
    <alternativeName>
        <fullName evidence="5">C-type cytochrome FixP</fullName>
        <shortName evidence="1">Cyt c(FixP)</shortName>
    </alternativeName>
    <alternativeName>
        <fullName evidence="1">Cytochrome c oxidase subunit III</fullName>
    </alternativeName>
</protein>
<name>FIXP_RHIME</name>